<keyword id="KW-1185">Reference proteome</keyword>
<keyword id="KW-0687">Ribonucleoprotein</keyword>
<keyword id="KW-0689">Ribosomal protein</keyword>
<dbReference type="EMBL" id="CP000316">
    <property type="protein sequence ID" value="ABE46330.1"/>
    <property type="molecule type" value="Genomic_DNA"/>
</dbReference>
<dbReference type="RefSeq" id="WP_011485319.1">
    <property type="nucleotide sequence ID" value="NC_007948.1"/>
</dbReference>
<dbReference type="SMR" id="Q123G2"/>
<dbReference type="STRING" id="296591.Bpro_4443"/>
<dbReference type="KEGG" id="pol:Bpro_4443"/>
<dbReference type="eggNOG" id="COG0222">
    <property type="taxonomic scope" value="Bacteria"/>
</dbReference>
<dbReference type="HOGENOM" id="CLU_086499_3_2_4"/>
<dbReference type="OrthoDB" id="9811748at2"/>
<dbReference type="Proteomes" id="UP000001983">
    <property type="component" value="Chromosome"/>
</dbReference>
<dbReference type="GO" id="GO:0022625">
    <property type="term" value="C:cytosolic large ribosomal subunit"/>
    <property type="evidence" value="ECO:0007669"/>
    <property type="project" value="TreeGrafter"/>
</dbReference>
<dbReference type="GO" id="GO:0003729">
    <property type="term" value="F:mRNA binding"/>
    <property type="evidence" value="ECO:0007669"/>
    <property type="project" value="TreeGrafter"/>
</dbReference>
<dbReference type="GO" id="GO:0003735">
    <property type="term" value="F:structural constituent of ribosome"/>
    <property type="evidence" value="ECO:0007669"/>
    <property type="project" value="InterPro"/>
</dbReference>
<dbReference type="GO" id="GO:0006412">
    <property type="term" value="P:translation"/>
    <property type="evidence" value="ECO:0007669"/>
    <property type="project" value="UniProtKB-UniRule"/>
</dbReference>
<dbReference type="CDD" id="cd00387">
    <property type="entry name" value="Ribosomal_L7_L12"/>
    <property type="match status" value="1"/>
</dbReference>
<dbReference type="FunFam" id="3.30.1390.10:FF:000001">
    <property type="entry name" value="50S ribosomal protein L7/L12"/>
    <property type="match status" value="1"/>
</dbReference>
<dbReference type="Gene3D" id="3.30.1390.10">
    <property type="match status" value="1"/>
</dbReference>
<dbReference type="Gene3D" id="1.20.5.710">
    <property type="entry name" value="Single helix bin"/>
    <property type="match status" value="1"/>
</dbReference>
<dbReference type="HAMAP" id="MF_00368">
    <property type="entry name" value="Ribosomal_bL12"/>
    <property type="match status" value="1"/>
</dbReference>
<dbReference type="InterPro" id="IPR000206">
    <property type="entry name" value="Ribosomal_bL12"/>
</dbReference>
<dbReference type="InterPro" id="IPR013823">
    <property type="entry name" value="Ribosomal_bL12_C"/>
</dbReference>
<dbReference type="InterPro" id="IPR014719">
    <property type="entry name" value="Ribosomal_bL12_C/ClpS-like"/>
</dbReference>
<dbReference type="InterPro" id="IPR008932">
    <property type="entry name" value="Ribosomal_bL12_oligo"/>
</dbReference>
<dbReference type="InterPro" id="IPR036235">
    <property type="entry name" value="Ribosomal_bL12_oligo_N_sf"/>
</dbReference>
<dbReference type="NCBIfam" id="TIGR00855">
    <property type="entry name" value="L12"/>
    <property type="match status" value="1"/>
</dbReference>
<dbReference type="PANTHER" id="PTHR45987">
    <property type="entry name" value="39S RIBOSOMAL PROTEIN L12"/>
    <property type="match status" value="1"/>
</dbReference>
<dbReference type="PANTHER" id="PTHR45987:SF4">
    <property type="entry name" value="LARGE RIBOSOMAL SUBUNIT PROTEIN BL12M"/>
    <property type="match status" value="1"/>
</dbReference>
<dbReference type="Pfam" id="PF00542">
    <property type="entry name" value="Ribosomal_L12"/>
    <property type="match status" value="1"/>
</dbReference>
<dbReference type="Pfam" id="PF16320">
    <property type="entry name" value="Ribosomal_L12_N"/>
    <property type="match status" value="1"/>
</dbReference>
<dbReference type="SUPFAM" id="SSF54736">
    <property type="entry name" value="ClpS-like"/>
    <property type="match status" value="1"/>
</dbReference>
<dbReference type="SUPFAM" id="SSF48300">
    <property type="entry name" value="Ribosomal protein L7/12, oligomerisation (N-terminal) domain"/>
    <property type="match status" value="1"/>
</dbReference>
<evidence type="ECO:0000255" key="1">
    <source>
        <dbReference type="HAMAP-Rule" id="MF_00368"/>
    </source>
</evidence>
<evidence type="ECO:0000305" key="2"/>
<accession>Q123G2</accession>
<sequence>MAFDKDAFLTALDSMTVLELNDLVKAIEEKFGVSAAAMAAPAAAGGGGAAAAAEEKTEFNVVLLEAGANKVSVIKAVREITGLGLKEAKDLVDGAPKNVKEAAPKADADAAKKKLEDAGAKVELK</sequence>
<feature type="chain" id="PRO_1000007055" description="Large ribosomal subunit protein bL12">
    <location>
        <begin position="1"/>
        <end position="125"/>
    </location>
</feature>
<protein>
    <recommendedName>
        <fullName evidence="1">Large ribosomal subunit protein bL12</fullName>
    </recommendedName>
    <alternativeName>
        <fullName evidence="2">50S ribosomal protein L7/L12</fullName>
    </alternativeName>
</protein>
<proteinExistence type="inferred from homology"/>
<comment type="function">
    <text evidence="1">Forms part of the ribosomal stalk which helps the ribosome interact with GTP-bound translation factors. Is thus essential for accurate translation.</text>
</comment>
<comment type="subunit">
    <text evidence="1">Homodimer. Part of the ribosomal stalk of the 50S ribosomal subunit. Forms a multimeric L10(L12)X complex, where L10 forms an elongated spine to which 2 to 4 L12 dimers bind in a sequential fashion. Binds GTP-bound translation factors.</text>
</comment>
<comment type="similarity">
    <text evidence="1">Belongs to the bacterial ribosomal protein bL12 family.</text>
</comment>
<name>RL7_POLSJ</name>
<gene>
    <name evidence="1" type="primary">rplL</name>
    <name type="ordered locus">Bpro_4443</name>
</gene>
<organism>
    <name type="scientific">Polaromonas sp. (strain JS666 / ATCC BAA-500)</name>
    <dbReference type="NCBI Taxonomy" id="296591"/>
    <lineage>
        <taxon>Bacteria</taxon>
        <taxon>Pseudomonadati</taxon>
        <taxon>Pseudomonadota</taxon>
        <taxon>Betaproteobacteria</taxon>
        <taxon>Burkholderiales</taxon>
        <taxon>Comamonadaceae</taxon>
        <taxon>Polaromonas</taxon>
    </lineage>
</organism>
<reference key="1">
    <citation type="journal article" date="2008" name="Appl. Environ. Microbiol.">
        <title>The genome of Polaromonas sp. strain JS666: insights into the evolution of a hydrocarbon- and xenobiotic-degrading bacterium, and features of relevance to biotechnology.</title>
        <authorList>
            <person name="Mattes T.E."/>
            <person name="Alexander A.K."/>
            <person name="Richardson P.M."/>
            <person name="Munk A.C."/>
            <person name="Han C.S."/>
            <person name="Stothard P."/>
            <person name="Coleman N.V."/>
        </authorList>
    </citation>
    <scope>NUCLEOTIDE SEQUENCE [LARGE SCALE GENOMIC DNA]</scope>
    <source>
        <strain>JS666 / ATCC BAA-500</strain>
    </source>
</reference>